<proteinExistence type="inferred from homology"/>
<accession>Q1XDM3</accession>
<gene>
    <name type="primary">ycf43</name>
</gene>
<comment type="subcellular location">
    <subcellularLocation>
        <location evidence="2">Plastid</location>
        <location evidence="2">Chloroplast membrane</location>
        <topology evidence="2">Multi-pass membrane protein</topology>
    </subcellularLocation>
</comment>
<comment type="similarity">
    <text evidence="2">Belongs to the TatC family.</text>
</comment>
<geneLocation type="chloroplast"/>
<evidence type="ECO:0000255" key="1"/>
<evidence type="ECO:0000305" key="2"/>
<dbReference type="EMBL" id="AP006715">
    <property type="protein sequence ID" value="BAE92388.1"/>
    <property type="molecule type" value="Genomic_DNA"/>
</dbReference>
<dbReference type="SMR" id="Q1XDM3"/>
<dbReference type="GO" id="GO:0031969">
    <property type="term" value="C:chloroplast membrane"/>
    <property type="evidence" value="ECO:0007669"/>
    <property type="project" value="UniProtKB-SubCell"/>
</dbReference>
<dbReference type="GO" id="GO:0033281">
    <property type="term" value="C:TAT protein transport complex"/>
    <property type="evidence" value="ECO:0007669"/>
    <property type="project" value="TreeGrafter"/>
</dbReference>
<dbReference type="GO" id="GO:0009977">
    <property type="term" value="F:proton motive force dependent protein transmembrane transporter activity"/>
    <property type="evidence" value="ECO:0007669"/>
    <property type="project" value="TreeGrafter"/>
</dbReference>
<dbReference type="GO" id="GO:0065002">
    <property type="term" value="P:intracellular protein transmembrane transport"/>
    <property type="evidence" value="ECO:0007669"/>
    <property type="project" value="TreeGrafter"/>
</dbReference>
<dbReference type="GO" id="GO:0043953">
    <property type="term" value="P:protein transport by the Tat complex"/>
    <property type="evidence" value="ECO:0007669"/>
    <property type="project" value="TreeGrafter"/>
</dbReference>
<dbReference type="HAMAP" id="MF_00902">
    <property type="entry name" value="TatC"/>
    <property type="match status" value="1"/>
</dbReference>
<dbReference type="InterPro" id="IPR019820">
    <property type="entry name" value="Sec-indep_translocase_CS"/>
</dbReference>
<dbReference type="InterPro" id="IPR002033">
    <property type="entry name" value="TatC"/>
</dbReference>
<dbReference type="NCBIfam" id="TIGR00945">
    <property type="entry name" value="tatC"/>
    <property type="match status" value="1"/>
</dbReference>
<dbReference type="PANTHER" id="PTHR30371">
    <property type="entry name" value="SEC-INDEPENDENT PROTEIN TRANSLOCASE PROTEIN TATC"/>
    <property type="match status" value="1"/>
</dbReference>
<dbReference type="PANTHER" id="PTHR30371:SF0">
    <property type="entry name" value="SEC-INDEPENDENT PROTEIN TRANSLOCASE PROTEIN TATC, CHLOROPLASTIC-RELATED"/>
    <property type="match status" value="1"/>
</dbReference>
<dbReference type="Pfam" id="PF00902">
    <property type="entry name" value="TatC"/>
    <property type="match status" value="1"/>
</dbReference>
<dbReference type="PRINTS" id="PR01840">
    <property type="entry name" value="TATCFAMILY"/>
</dbReference>
<dbReference type="PROSITE" id="PS01218">
    <property type="entry name" value="TATC"/>
    <property type="match status" value="1"/>
</dbReference>
<sequence>MNLKPQNNLLTNENIDHVDIPENDIPMSITEHLEELRQRTLFVFLFFLFATTISFTQIKIIVAILQAPAVGIKFLQLAPGEYFFSSIKVAIYCGIVATTPFAVYQVILYILPGLTGKERKIILPLLISSVLLFITGGIFAYFVLAPAALTFLISYGSDIVEPLWSFEQYFDFILLLLLSTGLAFEIPIIQLLLGVSGTFSSSQMIRAWRYIIIIATIAGAILTPSTDPVTQLIMSSAVLLLYFGGIVILLVLKK</sequence>
<feature type="chain" id="PRO_0000277350" description="Uncharacterized tatC-like protein ycf43">
    <location>
        <begin position="1"/>
        <end position="254"/>
    </location>
</feature>
<feature type="transmembrane region" description="Helical" evidence="1">
    <location>
        <begin position="41"/>
        <end position="61"/>
    </location>
</feature>
<feature type="transmembrane region" description="Helical" evidence="1">
    <location>
        <begin position="64"/>
        <end position="84"/>
    </location>
</feature>
<feature type="transmembrane region" description="Helical" evidence="1">
    <location>
        <begin position="91"/>
        <end position="111"/>
    </location>
</feature>
<feature type="transmembrane region" description="Helical" evidence="1">
    <location>
        <begin position="125"/>
        <end position="145"/>
    </location>
</feature>
<feature type="transmembrane region" description="Helical" evidence="1">
    <location>
        <begin position="146"/>
        <end position="166"/>
    </location>
</feature>
<feature type="transmembrane region" description="Helical" evidence="1">
    <location>
        <begin position="172"/>
        <end position="192"/>
    </location>
</feature>
<feature type="transmembrane region" description="Helical" evidence="1">
    <location>
        <begin position="204"/>
        <end position="224"/>
    </location>
</feature>
<feature type="transmembrane region" description="Helical" evidence="1">
    <location>
        <begin position="232"/>
        <end position="252"/>
    </location>
</feature>
<protein>
    <recommendedName>
        <fullName>Uncharacterized tatC-like protein ycf43</fullName>
    </recommendedName>
</protein>
<keyword id="KW-0150">Chloroplast</keyword>
<keyword id="KW-0472">Membrane</keyword>
<keyword id="KW-0934">Plastid</keyword>
<keyword id="KW-0812">Transmembrane</keyword>
<keyword id="KW-1133">Transmembrane helix</keyword>
<name>YCF43_PYRYE</name>
<reference key="1">
    <citation type="submission" date="2003-11" db="EMBL/GenBank/DDBJ databases">
        <title>Whole genome sequence of Porphyra yezoensis chloroplast.</title>
        <authorList>
            <person name="Kunimoto M."/>
            <person name="Morishima K."/>
            <person name="Yoshikawa M."/>
            <person name="Fukuda S."/>
            <person name="Kobayashi T."/>
            <person name="Kobayashi M."/>
            <person name="Okazaki T."/>
            <person name="Ohara I."/>
            <person name="Nakayama I."/>
        </authorList>
    </citation>
    <scope>NUCLEOTIDE SEQUENCE [LARGE SCALE GENOMIC DNA]</scope>
    <source>
        <strain>U-51</strain>
    </source>
</reference>
<organism>
    <name type="scientific">Pyropia yezoensis</name>
    <name type="common">Susabi-nori</name>
    <name type="synonym">Porphyra yezoensis</name>
    <dbReference type="NCBI Taxonomy" id="2788"/>
    <lineage>
        <taxon>Eukaryota</taxon>
        <taxon>Rhodophyta</taxon>
        <taxon>Bangiophyceae</taxon>
        <taxon>Bangiales</taxon>
        <taxon>Bangiaceae</taxon>
        <taxon>Pyropia</taxon>
    </lineage>
</organism>